<feature type="chain" id="PRO_1000009601" description="Phosphoglycerate kinase">
    <location>
        <begin position="1"/>
        <end position="397"/>
    </location>
</feature>
<feature type="binding site" evidence="1">
    <location>
        <begin position="25"/>
        <end position="27"/>
    </location>
    <ligand>
        <name>substrate</name>
    </ligand>
</feature>
<feature type="binding site" evidence="1">
    <location>
        <position position="41"/>
    </location>
    <ligand>
        <name>substrate</name>
    </ligand>
</feature>
<feature type="binding site" evidence="1">
    <location>
        <begin position="64"/>
        <end position="67"/>
    </location>
    <ligand>
        <name>substrate</name>
    </ligand>
</feature>
<feature type="binding site" evidence="1">
    <location>
        <position position="118"/>
    </location>
    <ligand>
        <name>substrate</name>
    </ligand>
</feature>
<feature type="binding site" evidence="1">
    <location>
        <position position="151"/>
    </location>
    <ligand>
        <name>substrate</name>
    </ligand>
</feature>
<feature type="binding site" evidence="1">
    <location>
        <position position="202"/>
    </location>
    <ligand>
        <name>ATP</name>
        <dbReference type="ChEBI" id="CHEBI:30616"/>
    </ligand>
</feature>
<feature type="binding site" evidence="1">
    <location>
        <position position="324"/>
    </location>
    <ligand>
        <name>ATP</name>
        <dbReference type="ChEBI" id="CHEBI:30616"/>
    </ligand>
</feature>
<feature type="binding site" evidence="1">
    <location>
        <begin position="350"/>
        <end position="353"/>
    </location>
    <ligand>
        <name>ATP</name>
        <dbReference type="ChEBI" id="CHEBI:30616"/>
    </ligand>
</feature>
<organism>
    <name type="scientific">Paracidovorax citrulli (strain AAC00-1)</name>
    <name type="common">Acidovorax citrulli</name>
    <dbReference type="NCBI Taxonomy" id="397945"/>
    <lineage>
        <taxon>Bacteria</taxon>
        <taxon>Pseudomonadati</taxon>
        <taxon>Pseudomonadota</taxon>
        <taxon>Betaproteobacteria</taxon>
        <taxon>Burkholderiales</taxon>
        <taxon>Comamonadaceae</taxon>
        <taxon>Paracidovorax</taxon>
    </lineage>
</organism>
<protein>
    <recommendedName>
        <fullName evidence="1">Phosphoglycerate kinase</fullName>
        <ecNumber evidence="1">2.7.2.3</ecNumber>
    </recommendedName>
</protein>
<evidence type="ECO:0000255" key="1">
    <source>
        <dbReference type="HAMAP-Rule" id="MF_00145"/>
    </source>
</evidence>
<comment type="catalytic activity">
    <reaction evidence="1">
        <text>(2R)-3-phosphoglycerate + ATP = (2R)-3-phospho-glyceroyl phosphate + ADP</text>
        <dbReference type="Rhea" id="RHEA:14801"/>
        <dbReference type="ChEBI" id="CHEBI:30616"/>
        <dbReference type="ChEBI" id="CHEBI:57604"/>
        <dbReference type="ChEBI" id="CHEBI:58272"/>
        <dbReference type="ChEBI" id="CHEBI:456216"/>
        <dbReference type="EC" id="2.7.2.3"/>
    </reaction>
</comment>
<comment type="pathway">
    <text evidence="1">Carbohydrate degradation; glycolysis; pyruvate from D-glyceraldehyde 3-phosphate: step 2/5.</text>
</comment>
<comment type="subunit">
    <text evidence="1">Monomer.</text>
</comment>
<comment type="subcellular location">
    <subcellularLocation>
        <location evidence="1">Cytoplasm</location>
    </subcellularLocation>
</comment>
<comment type="similarity">
    <text evidence="1">Belongs to the phosphoglycerate kinase family.</text>
</comment>
<dbReference type="EC" id="2.7.2.3" evidence="1"/>
<dbReference type="EMBL" id="CP000512">
    <property type="protein sequence ID" value="ABM35228.1"/>
    <property type="molecule type" value="Genomic_DNA"/>
</dbReference>
<dbReference type="RefSeq" id="WP_011797694.1">
    <property type="nucleotide sequence ID" value="NC_008752.1"/>
</dbReference>
<dbReference type="SMR" id="A1TW90"/>
<dbReference type="STRING" id="397945.Aave_4693"/>
<dbReference type="KEGG" id="aav:Aave_4693"/>
<dbReference type="eggNOG" id="COG0126">
    <property type="taxonomic scope" value="Bacteria"/>
</dbReference>
<dbReference type="HOGENOM" id="CLU_025427_0_2_4"/>
<dbReference type="OrthoDB" id="9808460at2"/>
<dbReference type="UniPathway" id="UPA00109">
    <property type="reaction ID" value="UER00185"/>
</dbReference>
<dbReference type="Proteomes" id="UP000002596">
    <property type="component" value="Chromosome"/>
</dbReference>
<dbReference type="GO" id="GO:0005829">
    <property type="term" value="C:cytosol"/>
    <property type="evidence" value="ECO:0007669"/>
    <property type="project" value="TreeGrafter"/>
</dbReference>
<dbReference type="GO" id="GO:0043531">
    <property type="term" value="F:ADP binding"/>
    <property type="evidence" value="ECO:0007669"/>
    <property type="project" value="TreeGrafter"/>
</dbReference>
<dbReference type="GO" id="GO:0005524">
    <property type="term" value="F:ATP binding"/>
    <property type="evidence" value="ECO:0007669"/>
    <property type="project" value="UniProtKB-KW"/>
</dbReference>
<dbReference type="GO" id="GO:0004618">
    <property type="term" value="F:phosphoglycerate kinase activity"/>
    <property type="evidence" value="ECO:0007669"/>
    <property type="project" value="UniProtKB-UniRule"/>
</dbReference>
<dbReference type="GO" id="GO:0006094">
    <property type="term" value="P:gluconeogenesis"/>
    <property type="evidence" value="ECO:0007669"/>
    <property type="project" value="TreeGrafter"/>
</dbReference>
<dbReference type="GO" id="GO:0006096">
    <property type="term" value="P:glycolytic process"/>
    <property type="evidence" value="ECO:0007669"/>
    <property type="project" value="UniProtKB-UniRule"/>
</dbReference>
<dbReference type="FunFam" id="3.40.50.1260:FF:000001">
    <property type="entry name" value="Phosphoglycerate kinase"/>
    <property type="match status" value="1"/>
</dbReference>
<dbReference type="FunFam" id="3.40.50.1260:FF:000002">
    <property type="entry name" value="Phosphoglycerate kinase"/>
    <property type="match status" value="1"/>
</dbReference>
<dbReference type="Gene3D" id="3.40.50.1260">
    <property type="entry name" value="Phosphoglycerate kinase, N-terminal domain"/>
    <property type="match status" value="2"/>
</dbReference>
<dbReference type="HAMAP" id="MF_00145">
    <property type="entry name" value="Phosphoglyc_kinase"/>
    <property type="match status" value="1"/>
</dbReference>
<dbReference type="InterPro" id="IPR001576">
    <property type="entry name" value="Phosphoglycerate_kinase"/>
</dbReference>
<dbReference type="InterPro" id="IPR015911">
    <property type="entry name" value="Phosphoglycerate_kinase_CS"/>
</dbReference>
<dbReference type="InterPro" id="IPR015824">
    <property type="entry name" value="Phosphoglycerate_kinase_N"/>
</dbReference>
<dbReference type="InterPro" id="IPR036043">
    <property type="entry name" value="Phosphoglycerate_kinase_sf"/>
</dbReference>
<dbReference type="PANTHER" id="PTHR11406">
    <property type="entry name" value="PHOSPHOGLYCERATE KINASE"/>
    <property type="match status" value="1"/>
</dbReference>
<dbReference type="PANTHER" id="PTHR11406:SF23">
    <property type="entry name" value="PHOSPHOGLYCERATE KINASE 1, CHLOROPLASTIC-RELATED"/>
    <property type="match status" value="1"/>
</dbReference>
<dbReference type="Pfam" id="PF00162">
    <property type="entry name" value="PGK"/>
    <property type="match status" value="1"/>
</dbReference>
<dbReference type="PIRSF" id="PIRSF000724">
    <property type="entry name" value="Pgk"/>
    <property type="match status" value="1"/>
</dbReference>
<dbReference type="PRINTS" id="PR00477">
    <property type="entry name" value="PHGLYCKINASE"/>
</dbReference>
<dbReference type="SUPFAM" id="SSF53748">
    <property type="entry name" value="Phosphoglycerate kinase"/>
    <property type="match status" value="1"/>
</dbReference>
<dbReference type="PROSITE" id="PS00111">
    <property type="entry name" value="PGLYCERATE_KINASE"/>
    <property type="match status" value="1"/>
</dbReference>
<proteinExistence type="inferred from homology"/>
<gene>
    <name evidence="1" type="primary">pgk</name>
    <name type="ordered locus">Aave_4693</name>
</gene>
<reference key="1">
    <citation type="submission" date="2006-12" db="EMBL/GenBank/DDBJ databases">
        <title>Complete sequence of Acidovorax avenae subsp. citrulli AAC00-1.</title>
        <authorList>
            <person name="Copeland A."/>
            <person name="Lucas S."/>
            <person name="Lapidus A."/>
            <person name="Barry K."/>
            <person name="Detter J.C."/>
            <person name="Glavina del Rio T."/>
            <person name="Dalin E."/>
            <person name="Tice H."/>
            <person name="Pitluck S."/>
            <person name="Kiss H."/>
            <person name="Brettin T."/>
            <person name="Bruce D."/>
            <person name="Han C."/>
            <person name="Tapia R."/>
            <person name="Gilna P."/>
            <person name="Schmutz J."/>
            <person name="Larimer F."/>
            <person name="Land M."/>
            <person name="Hauser L."/>
            <person name="Kyrpides N."/>
            <person name="Kim E."/>
            <person name="Stahl D."/>
            <person name="Richardson P."/>
        </authorList>
    </citation>
    <scope>NUCLEOTIDE SEQUENCE [LARGE SCALE GENOMIC DNA]</scope>
    <source>
        <strain>AAC00-1</strain>
    </source>
</reference>
<sequence>MQILRFSDLCAQGQARGQRVFIRADLNVPQDDDGRITEDTRIRASVPCIRMALDAGAAVMVTSHLGRPTEGTLTPADSLAPVAARLSELLGCDVPLVADWVDGVQVQPGQVVLLENCRVNVGEKKNTPELAQKMAKLCDIYVNDAFGTAHRAEGTTYGIAEYAKVACAGPLLSAEIDAIGKALSQPARPLAAIVAGSKVSTKLTILKSLSDKVDQLIVGGGIANTFMLAAGLSIGKSLAEPDLVSEAKAVIEAMKARGAEVPIPTDVVVAKTFSADAPATVKAATDVADDDLILDIGPQTAAKLAAQLKAAGTIVWNGPVGVFEFPAFENGTKAIAQAIAESPAFSIAGGGDTLAAIAKYGIEKDVGYISTGGGAFLEVLEGKTLPAFEILHKRANG</sequence>
<keyword id="KW-0067">ATP-binding</keyword>
<keyword id="KW-0963">Cytoplasm</keyword>
<keyword id="KW-0324">Glycolysis</keyword>
<keyword id="KW-0418">Kinase</keyword>
<keyword id="KW-0547">Nucleotide-binding</keyword>
<keyword id="KW-0808">Transferase</keyword>
<name>PGK_PARC0</name>
<accession>A1TW90</accession>